<accession>Q9L9D7</accession>
<proteinExistence type="evidence at protein level"/>
<protein>
    <recommendedName>
        <fullName>Cocaine esterase</fullName>
        <ecNumber>3.1.1.84</ecNumber>
    </recommendedName>
</protein>
<comment type="function">
    <text evidence="1 3 4">Hydrolyzes cocaine to benzoate and ecgonine methyl ester, endowing the bacteria with the ability to utilize cocaine as a sole source of carbon and energy for growth, as this bacterium lives in the rhizosphere of coca plants. Also efficiently hydrolyzes cocaethylene, a more potent cocaine metabolite that has been observed in patients who concurrently abuse cocaine and alcohol. Is able to prevent cocaine-induced convulsions and lethality in rat.</text>
</comment>
<comment type="catalytic activity">
    <reaction evidence="1 3 5">
        <text>cocaine + H2O = ecgonine methyl ester + benzoate + H(+)</text>
        <dbReference type="Rhea" id="RHEA:27506"/>
        <dbReference type="ChEBI" id="CHEBI:15377"/>
        <dbReference type="ChEBI" id="CHEBI:15378"/>
        <dbReference type="ChEBI" id="CHEBI:16150"/>
        <dbReference type="ChEBI" id="CHEBI:59908"/>
        <dbReference type="ChEBI" id="CHEBI:60056"/>
        <dbReference type="EC" id="3.1.1.84"/>
    </reaction>
</comment>
<comment type="biophysicochemical properties">
    <kinetics>
        <KM evidence="3">0.64 uM for cocaine</KM>
        <KM evidence="3">1.6 uM for cocaethylene</KM>
        <text>kcat is 7.8 sec(-1) with cocaine as substrate, and 9.4 sec(-1) with cocaethylene.</text>
    </kinetics>
    <phDependence>
        <text evidence="3">Optimum pH is 9.0.</text>
    </phDependence>
    <temperatureDependence>
        <text evidence="3 4">Is relatively unstable at physiological temperatures since it displays a half-life of 13 minutes in rat plasma at 37 degrees Celsius.</text>
    </temperatureDependence>
</comment>
<comment type="pathway">
    <text>Alkaloid degradation; cocaine degradation.</text>
</comment>
<comment type="subunit">
    <text evidence="3 5">Homodimer. The protein aggregates upon heat inactivation.</text>
</comment>
<comment type="subcellular location">
    <subcellularLocation>
        <location evidence="6">Cytoplasm</location>
    </subcellularLocation>
</comment>
<comment type="induction">
    <text evidence="1">Positively induced by cocaine.</text>
</comment>
<comment type="domain">
    <text evidence="2">It consists of three domains: domain 1 contains the active site; domains 2 and 3 are involved in substrate recognition. Domain 1 contains the GxSxxG motif found in most members of the alpha/beta hydrolase superfamily.</text>
</comment>
<comment type="biotechnology">
    <text evidence="1 3">Because of the high catalytic proficiency of CocE, it is an attractive candidate for novel protein-based therapies for cocaine overdose, as this cocaine-degrading enzyme could be used for rapid cocaine detoxification in an emergency setting. However, wild-type CocE is relatively unstable, but this can be improved by specific mutations. Thus, improved stability of engineered CocE enzymes will have a profound influence on the use of this protein to combat cocaine-induced toxicity and addiction in humans. Also has a potential as a highly-sensitive drug detector.</text>
</comment>
<comment type="miscellaneous">
    <text>This enzyme hydrolyzes cocaine faster than any other known cocaine esterase.</text>
</comment>
<comment type="miscellaneous">
    <text>Incorporating disulfide bonds between cysteine residues substituted at Gly-4 and Ser-10 conveys significant improvements to the thermostability and the half-life at 37 degrees Celsius. Moreover, in combination with T172R/G173Q mutations, the disulfide-stabilized dimer (CCRQ-CocE) remains more than 90% active for longer than 40 days at 37 degrees Celsius, representing a &gt;4700-fold improvement over wt-CocE. The enhanced stability serves as a better substrate for modification, with polyethylene glycol (PEG) moieties providing the therapeutic with stealth properties. PEGylated CCRQ-CocE retains full in vitro enzymatic activity, protects rodents up to 72 hours in a cocaine overdose model, diminishes self-administration for 72 hours in rats, reduces cocaine-induced cardiovascular effects and locomotor functions in monkeys for up to 48 hours, and displays reduced immunogenicity in mice.</text>
</comment>
<comment type="similarity">
    <text evidence="6">Belongs to the CocE/NonD hydrolase family.</text>
</comment>
<comment type="online information" name="Protein Spotlight">
    <link uri="https://www.proteinspotlight.org/back_issues/027"/>
    <text>Rhodococcus: Nature's junkie - Issue 27 of October 2002</text>
</comment>
<dbReference type="EC" id="3.1.1.84"/>
<dbReference type="EMBL" id="AF173165">
    <property type="protein sequence ID" value="AAF42807.1"/>
    <property type="molecule type" value="Genomic_DNA"/>
</dbReference>
<dbReference type="PDB" id="1JU3">
    <property type="method" value="X-ray"/>
    <property type="resolution" value="1.58 A"/>
    <property type="chains" value="A=1-574"/>
</dbReference>
<dbReference type="PDB" id="1JU4">
    <property type="method" value="X-ray"/>
    <property type="resolution" value="1.63 A"/>
    <property type="chains" value="A=1-574"/>
</dbReference>
<dbReference type="PDB" id="1L7Q">
    <property type="method" value="X-ray"/>
    <property type="resolution" value="1.76 A"/>
    <property type="chains" value="A=1-574"/>
</dbReference>
<dbReference type="PDB" id="1L7R">
    <property type="method" value="X-ray"/>
    <property type="resolution" value="1.64 A"/>
    <property type="chains" value="A=1-574"/>
</dbReference>
<dbReference type="PDB" id="3I2F">
    <property type="method" value="X-ray"/>
    <property type="resolution" value="2.50 A"/>
    <property type="chains" value="A=1-574"/>
</dbReference>
<dbReference type="PDB" id="3I2G">
    <property type="method" value="X-ray"/>
    <property type="resolution" value="2.50 A"/>
    <property type="chains" value="A=1-574"/>
</dbReference>
<dbReference type="PDB" id="3I2H">
    <property type="method" value="X-ray"/>
    <property type="resolution" value="1.65 A"/>
    <property type="chains" value="A=1-574"/>
</dbReference>
<dbReference type="PDB" id="3I2I">
    <property type="method" value="X-ray"/>
    <property type="resolution" value="2.14 A"/>
    <property type="chains" value="A=1-574"/>
</dbReference>
<dbReference type="PDB" id="3I2J">
    <property type="method" value="X-ray"/>
    <property type="resolution" value="2.01 A"/>
    <property type="chains" value="A=1-574"/>
</dbReference>
<dbReference type="PDB" id="3I2K">
    <property type="method" value="X-ray"/>
    <property type="resolution" value="1.51 A"/>
    <property type="chains" value="A=1-574"/>
</dbReference>
<dbReference type="PDB" id="3IDA">
    <property type="method" value="X-ray"/>
    <property type="resolution" value="1.60 A"/>
    <property type="chains" value="A=1-574"/>
</dbReference>
<dbReference type="PDB" id="3PUH">
    <property type="method" value="X-ray"/>
    <property type="resolution" value="2.30 A"/>
    <property type="chains" value="A/B=1-574"/>
</dbReference>
<dbReference type="PDB" id="3PUI">
    <property type="method" value="X-ray"/>
    <property type="resolution" value="1.53 A"/>
    <property type="chains" value="A=1-574"/>
</dbReference>
<dbReference type="PDB" id="4P08">
    <property type="method" value="X-ray"/>
    <property type="resolution" value="2.34 A"/>
    <property type="chains" value="A=4-574"/>
</dbReference>
<dbReference type="PDB" id="7F65">
    <property type="method" value="X-ray"/>
    <property type="resolution" value="2.20 A"/>
    <property type="chains" value="A=1-574"/>
</dbReference>
<dbReference type="PDB" id="9K48">
    <property type="method" value="X-ray"/>
    <property type="resolution" value="2.25 A"/>
    <property type="chains" value="A=1-574"/>
</dbReference>
<dbReference type="PDBsum" id="1JU3"/>
<dbReference type="PDBsum" id="1JU4"/>
<dbReference type="PDBsum" id="1L7Q"/>
<dbReference type="PDBsum" id="1L7R"/>
<dbReference type="PDBsum" id="3I2F"/>
<dbReference type="PDBsum" id="3I2G"/>
<dbReference type="PDBsum" id="3I2H"/>
<dbReference type="PDBsum" id="3I2I"/>
<dbReference type="PDBsum" id="3I2J"/>
<dbReference type="PDBsum" id="3I2K"/>
<dbReference type="PDBsum" id="3IDA"/>
<dbReference type="PDBsum" id="3PUH"/>
<dbReference type="PDBsum" id="3PUI"/>
<dbReference type="PDBsum" id="4P08"/>
<dbReference type="PDBsum" id="7F65"/>
<dbReference type="PDBsum" id="9K48"/>
<dbReference type="SMR" id="Q9L9D7"/>
<dbReference type="DrugBank" id="DB03793">
    <property type="generic name" value="Benzoic acid"/>
</dbReference>
<dbReference type="DrugBank" id="DB01795">
    <property type="generic name" value="Phenylboronic acid"/>
</dbReference>
<dbReference type="ESTHER" id="rhosm-cocE">
    <property type="family name" value="Cocaine_esterase"/>
</dbReference>
<dbReference type="KEGG" id="ag:AAF42807"/>
<dbReference type="BioCyc" id="MetaCyc:MONOMER-15371"/>
<dbReference type="BRENDA" id="3.1.1.84">
    <property type="organism ID" value="5397"/>
</dbReference>
<dbReference type="UniPathway" id="UPA00110"/>
<dbReference type="EvolutionaryTrace" id="Q9L9D7"/>
<dbReference type="GO" id="GO:0005737">
    <property type="term" value="C:cytoplasm"/>
    <property type="evidence" value="ECO:0007669"/>
    <property type="project" value="UniProtKB-SubCell"/>
</dbReference>
<dbReference type="GO" id="GO:0052689">
    <property type="term" value="F:carboxylic ester hydrolase activity"/>
    <property type="evidence" value="ECO:0007669"/>
    <property type="project" value="UniProtKB-KW"/>
</dbReference>
<dbReference type="GO" id="GO:0008239">
    <property type="term" value="F:dipeptidyl-peptidase activity"/>
    <property type="evidence" value="ECO:0007669"/>
    <property type="project" value="InterPro"/>
</dbReference>
<dbReference type="GO" id="GO:0050784">
    <property type="term" value="P:cocaine catabolic process"/>
    <property type="evidence" value="ECO:0007669"/>
    <property type="project" value="UniProtKB-UniPathway"/>
</dbReference>
<dbReference type="Gene3D" id="1.10.3020.10">
    <property type="entry name" value="alpha-amino acid ester hydrolase ( Helical cap domain)"/>
    <property type="match status" value="1"/>
</dbReference>
<dbReference type="Gene3D" id="3.40.50.1820">
    <property type="entry name" value="alpha/beta hydrolase"/>
    <property type="match status" value="1"/>
</dbReference>
<dbReference type="Gene3D" id="2.60.120.260">
    <property type="entry name" value="Galactose-binding domain-like"/>
    <property type="match status" value="1"/>
</dbReference>
<dbReference type="InterPro" id="IPR029058">
    <property type="entry name" value="AB_hydrolase_fold"/>
</dbReference>
<dbReference type="InterPro" id="IPR005674">
    <property type="entry name" value="CocE/Ser_esterase"/>
</dbReference>
<dbReference type="InterPro" id="IPR008979">
    <property type="entry name" value="Galactose-bd-like_sf"/>
</dbReference>
<dbReference type="InterPro" id="IPR000383">
    <property type="entry name" value="Xaa-Pro-like_dom"/>
</dbReference>
<dbReference type="InterPro" id="IPR013736">
    <property type="entry name" value="Xaa-Pro_dipept_C"/>
</dbReference>
<dbReference type="InterPro" id="IPR050585">
    <property type="entry name" value="Xaa-Pro_dipeptidyl-ppase/CocE"/>
</dbReference>
<dbReference type="NCBIfam" id="TIGR00976">
    <property type="entry name" value="CocE_NonD"/>
    <property type="match status" value="1"/>
</dbReference>
<dbReference type="PANTHER" id="PTHR43056:SF10">
    <property type="entry name" value="COCE_NOND FAMILY, PUTATIVE (AFU_ORTHOLOGUE AFUA_7G00600)-RELATED"/>
    <property type="match status" value="1"/>
</dbReference>
<dbReference type="PANTHER" id="PTHR43056">
    <property type="entry name" value="PEPTIDASE S9 PROLYL OLIGOPEPTIDASE"/>
    <property type="match status" value="1"/>
</dbReference>
<dbReference type="Pfam" id="PF02129">
    <property type="entry name" value="Peptidase_S15"/>
    <property type="match status" value="1"/>
</dbReference>
<dbReference type="Pfam" id="PF08530">
    <property type="entry name" value="PepX_C"/>
    <property type="match status" value="1"/>
</dbReference>
<dbReference type="SMART" id="SM00939">
    <property type="entry name" value="PepX_C"/>
    <property type="match status" value="1"/>
</dbReference>
<dbReference type="SUPFAM" id="SSF53474">
    <property type="entry name" value="alpha/beta-Hydrolases"/>
    <property type="match status" value="1"/>
</dbReference>
<dbReference type="SUPFAM" id="SSF49785">
    <property type="entry name" value="Galactose-binding domain-like"/>
    <property type="match status" value="1"/>
</dbReference>
<evidence type="ECO:0000269" key="1">
    <source>
    </source>
</evidence>
<evidence type="ECO:0000269" key="2">
    <source>
    </source>
</evidence>
<evidence type="ECO:0000269" key="3">
    <source>
    </source>
</evidence>
<evidence type="ECO:0000269" key="4">
    <source>
    </source>
</evidence>
<evidence type="ECO:0000269" key="5">
    <source>
    </source>
</evidence>
<evidence type="ECO:0000305" key="6"/>
<evidence type="ECO:0007829" key="7">
    <source>
        <dbReference type="PDB" id="3I2K"/>
    </source>
</evidence>
<evidence type="ECO:0007829" key="8">
    <source>
        <dbReference type="PDB" id="3PUI"/>
    </source>
</evidence>
<gene>
    <name type="primary">cocE</name>
</gene>
<reference key="1">
    <citation type="journal article" date="2000" name="Appl. Environ. Microbiol.">
        <title>Gene cloning and nucleotide sequencing and properties of a cocaine esterase from Rhodococcus sp. strain MB1.</title>
        <authorList>
            <person name="Bresler M.M."/>
            <person name="Rosser S.J."/>
            <person name="Basran A."/>
            <person name="Bruce N.C."/>
        </authorList>
    </citation>
    <scope>NUCLEOTIDE SEQUENCE [GENOMIC DNA]</scope>
    <scope>PROTEIN SEQUENCE OF 1-11</scope>
    <scope>FUNCTION</scope>
    <scope>CATALYTIC ACTIVITY</scope>
    <scope>BIOTECHNOLOGY</scope>
    <scope>INDUCTION</scope>
    <source>
        <strain>MB1</strain>
    </source>
</reference>
<reference key="2">
    <citation type="journal article" date="2006" name="Mol. Pharmacol.">
        <title>Rapid and robust protection against cocaine-induced lethality in rats by the bacterial cocaine esterase.</title>
        <authorList>
            <person name="Cooper Z.D."/>
            <person name="Narasimhan D."/>
            <person name="Sunahara R.K."/>
            <person name="Mierzejewski P."/>
            <person name="Jutkiewicz E.M."/>
            <person name="Larsen N.A."/>
            <person name="Wilson I.A."/>
            <person name="Landry D.W."/>
            <person name="Woods J.H."/>
        </authorList>
    </citation>
    <scope>FUNCTION</scope>
    <scope>TEMPERATURE DEPENDENCE</scope>
    <scope>MUTAGENESIS OF TYR-44 AND SER-117</scope>
    <source>
        <strain>MB1</strain>
    </source>
</reference>
<reference key="3">
    <citation type="journal article" date="2002" name="Nat. Struct. Biol.">
        <title>Crystal structure of a bacterial cocaine esterase.</title>
        <authorList>
            <person name="Larsen N.A."/>
            <person name="Turner J.M."/>
            <person name="Stevens J."/>
            <person name="Rosser S.J."/>
            <person name="Basran A."/>
            <person name="Lerner R.A."/>
            <person name="Bruce N.C."/>
            <person name="Wilson I.A."/>
        </authorList>
    </citation>
    <scope>X-RAY CRYSTALLOGRAPHY (1.58 ANGSTROMS) IN COMPLEXES WITH BENZOATE AND TRANSITION STATE ANALOG</scope>
    <scope>ACTIVE SITE</scope>
    <scope>REACTION MECHANISM</scope>
    <scope>DOMAIN</scope>
    <source>
        <strain>MB1</strain>
    </source>
</reference>
<reference key="4">
    <citation type="journal article" date="2002" name="Biochemistry">
        <title>Biochemical characterization and structural analysis of a highly proficient cocaine esterase.</title>
        <authorList>
            <person name="Turner J.M."/>
            <person name="Larsen N.A."/>
            <person name="Basran A."/>
            <person name="Barbas C.F. III"/>
            <person name="Bruce N.C."/>
            <person name="Wilson I.A."/>
            <person name="Lerner R.A."/>
        </authorList>
    </citation>
    <scope>X-RAY CRYSTALLOGRAPHY (1.6 ANGSTROMS) OF MUTANTS PHE-44 AND ALA-117 IN COMPLEX WITH BENZOATE</scope>
    <scope>FUNCTION</scope>
    <scope>CATALYTIC ACTIVITY</scope>
    <scope>BIOPHYSICOCHEMICAL PROPERTIES</scope>
    <scope>BIOTECHNOLOGY</scope>
    <scope>MUTAGENESIS OF TYR-44; GLN-55; SER-117; TRP-151; TRP-166; ASP-259; PHE-261; HIS-287; LEU-407 AND PHE-408</scope>
    <source>
        <strain>MB1</strain>
    </source>
</reference>
<reference key="5">
    <citation type="journal article" date="2010" name="Protein Eng. Des. Sel.">
        <title>Structural analysis of thermostabilizing mutations of cocaine esterase.</title>
        <authorList>
            <person name="Narasimhan D."/>
            <person name="Nance M.R."/>
            <person name="Gao D."/>
            <person name="Ko M.C."/>
            <person name="Macdonald J."/>
            <person name="Tamburi P."/>
            <person name="Yoon D."/>
            <person name="Landry D.M."/>
            <person name="Woods J.H."/>
            <person name="Zhan C.G."/>
            <person name="Tesmer J.J."/>
            <person name="Sunahara R.K."/>
        </authorList>
    </citation>
    <scope>X-RAY CRYSTALLOGRAPHY (1.51 ANGSTROMS) OF WILD-TYPE AND MUTANTS LYS-169; ARG-172; GLN-173 AND ARG-172/GLN-173</scope>
    <scope>MUTAGENESIS OF LEU-169; THR-172 AND GLY-173</scope>
    <scope>CATALYTIC ACTIVITY</scope>
    <scope>SUBUNIT</scope>
    <source>
        <strain>MB1</strain>
    </source>
</reference>
<reference key="6">
    <citation type="journal article" date="2011" name="Mol. Pharmacol.">
        <title>Subunit stabilization and polyethylene glycolation of cocaine esterase improves in vivo residence time.</title>
        <authorList>
            <person name="Narasimhan D."/>
            <person name="Collins G.T."/>
            <person name="Nance M.R."/>
            <person name="Nichols J."/>
            <person name="Edwald E."/>
            <person name="Chan J."/>
            <person name="Ko M.C."/>
            <person name="Woods J.H."/>
            <person name="Tesmer J.J."/>
            <person name="Sunahara R.K."/>
        </authorList>
    </citation>
    <scope>X-RAY CRYSTALLOGRAPHY (1.53 ANGSTROMS) OF WILD-TYPE AND A DISULFIDE-STABILIZED DIMERIC MUTANT</scope>
    <source>
        <strain>MB1</strain>
    </source>
</reference>
<keyword id="KW-0002">3D-structure</keyword>
<keyword id="KW-0963">Cytoplasm</keyword>
<keyword id="KW-0903">Direct protein sequencing</keyword>
<keyword id="KW-0378">Hydrolase</keyword>
<keyword id="KW-0719">Serine esterase</keyword>
<feature type="chain" id="PRO_0000090000" description="Cocaine esterase">
    <location>
        <begin position="1"/>
        <end position="574"/>
    </location>
</feature>
<feature type="region of interest" description="1A">
    <location>
        <begin position="1"/>
        <end position="144"/>
    </location>
</feature>
<feature type="region of interest" description="2">
    <location>
        <begin position="145"/>
        <end position="240"/>
    </location>
</feature>
<feature type="region of interest" description="1B">
    <location>
        <begin position="241"/>
        <end position="354"/>
    </location>
</feature>
<feature type="region of interest" description="3">
    <location>
        <begin position="355"/>
        <end position="574"/>
    </location>
</feature>
<feature type="active site" description="Acyl-ester intermediate" evidence="2">
    <location>
        <position position="117"/>
    </location>
</feature>
<feature type="active site" description="Charge relay system" evidence="2">
    <location>
        <position position="259"/>
    </location>
</feature>
<feature type="active site" description="Charge relay system" evidence="2">
    <location>
        <position position="287"/>
    </location>
</feature>
<feature type="binding site">
    <location>
        <position position="44"/>
    </location>
    <ligand>
        <name>substrate</name>
    </ligand>
</feature>
<feature type="binding site">
    <location>
        <position position="118"/>
    </location>
    <ligand>
        <name>substrate</name>
    </ligand>
</feature>
<feature type="site" description="Probably involved in activating the substrate carbonyl and the acyl enzyme for hydrolysis">
    <location>
        <position position="44"/>
    </location>
</feature>
<feature type="mutagenesis site" description="Loss of activity. Has no protective effects against cocaine-induced convulsions and lethality in rat." evidence="3 4">
    <original>Y</original>
    <variation>F</variation>
    <location>
        <position position="44"/>
    </location>
</feature>
<feature type="mutagenesis site" description="Decrease in activity." evidence="3">
    <original>Q</original>
    <variation>A</variation>
    <variation>E</variation>
    <location>
        <position position="55"/>
    </location>
</feature>
<feature type="mutagenesis site" description="Loss of activity. Has no protective effects against cocaine-induced convulsions and lethality in rat." evidence="3 4">
    <original>S</original>
    <variation>A</variation>
    <location>
        <position position="117"/>
    </location>
</feature>
<feature type="mutagenesis site" description="Great decrease in activity." evidence="3 4">
    <original>S</original>
    <variation>C</variation>
    <location>
        <position position="117"/>
    </location>
</feature>
<feature type="mutagenesis site" description="Decrease in activity." evidence="3">
    <original>W</original>
    <variation>A</variation>
    <location>
        <position position="151"/>
    </location>
</feature>
<feature type="mutagenesis site" description="Decrease in activity." evidence="3">
    <original>W</original>
    <variation>A</variation>
    <location>
        <position position="166"/>
    </location>
</feature>
<feature type="mutagenesis site" description="Displays greatly enhanced stability, with a half-life of 570 minutes at 37 degrees Celsius. Exhibits 4.5-fold reduction in catalytic efficiency." evidence="5">
    <original>L</original>
    <variation>K</variation>
    <location>
        <position position="169"/>
    </location>
</feature>
<feature type="mutagenesis site" description="Displays enhanced stability, with a half-life of 78 minutes at 37 degrees Celsius, and exhibits 3-fold reduction in catalytic efficiency. Displays enhanced stability, with a half-life of 370 minutes at 37 degrees Celsius, and exhibits 3-fold reduction in catalytic efficiency; when associated with Q-173." evidence="5">
    <original>T</original>
    <variation>R</variation>
    <location>
        <position position="172"/>
    </location>
</feature>
<feature type="mutagenesis site" description="Displays enhanced stability, with a half-life of 75 minutes at 37 degrees Celsius, and has no deleterious effect on catalytic efficiency. Displays enhanced stability, with a half-life of 370 minutes at 37 degrees Celsius, and exhibits 3-fold reduction in catalytic efficiency; when associated with R-172." evidence="5">
    <original>G</original>
    <variation>Q</variation>
    <location>
        <position position="173"/>
    </location>
</feature>
<feature type="mutagenesis site" description="Loss of activity." evidence="3">
    <original>D</original>
    <variation>N</variation>
    <location>
        <position position="259"/>
    </location>
</feature>
<feature type="mutagenesis site" description="Decrease in activity." evidence="3">
    <original>F</original>
    <variation>A</variation>
    <location>
        <position position="261"/>
    </location>
</feature>
<feature type="mutagenesis site" description="Loss of activity." evidence="3">
    <original>H</original>
    <variation>A</variation>
    <location>
        <position position="287"/>
    </location>
</feature>
<feature type="mutagenesis site" description="Decrease in activity." evidence="3">
    <original>L</original>
    <variation>A</variation>
    <location>
        <position position="407"/>
    </location>
</feature>
<feature type="mutagenesis site" description="Decrease in activity." evidence="3">
    <original>F</original>
    <variation>A</variation>
    <location>
        <position position="408"/>
    </location>
</feature>
<feature type="strand" evidence="7">
    <location>
        <begin position="6"/>
        <end position="15"/>
    </location>
</feature>
<feature type="strand" evidence="7">
    <location>
        <begin position="21"/>
        <end position="29"/>
    </location>
</feature>
<feature type="strand" evidence="7">
    <location>
        <begin position="35"/>
        <end position="44"/>
    </location>
</feature>
<feature type="helix" evidence="7">
    <location>
        <begin position="49"/>
        <end position="53"/>
    </location>
</feature>
<feature type="turn" evidence="7">
    <location>
        <begin position="54"/>
        <end position="56"/>
    </location>
</feature>
<feature type="helix" evidence="7">
    <location>
        <begin position="60"/>
        <end position="64"/>
    </location>
</feature>
<feature type="strand" evidence="7">
    <location>
        <begin position="68"/>
        <end position="73"/>
    </location>
</feature>
<feature type="turn" evidence="7">
    <location>
        <begin position="86"/>
        <end position="89"/>
    </location>
</feature>
<feature type="helix" evidence="7">
    <location>
        <begin position="90"/>
        <end position="103"/>
    </location>
</feature>
<feature type="strand" evidence="7">
    <location>
        <begin position="107"/>
        <end position="113"/>
    </location>
</feature>
<feature type="helix" evidence="7">
    <location>
        <begin position="118"/>
        <end position="127"/>
    </location>
</feature>
<feature type="strand" evidence="7">
    <location>
        <begin position="134"/>
        <end position="137"/>
    </location>
</feature>
<feature type="strand" evidence="7">
    <location>
        <begin position="139"/>
        <end position="141"/>
    </location>
</feature>
<feature type="helix" evidence="7">
    <location>
        <begin position="147"/>
        <end position="151"/>
    </location>
</feature>
<feature type="helix" evidence="7">
    <location>
        <begin position="160"/>
        <end position="177"/>
    </location>
</feature>
<feature type="strand" evidence="7">
    <location>
        <begin position="178"/>
        <end position="180"/>
    </location>
</feature>
<feature type="helix" evidence="7">
    <location>
        <begin position="185"/>
        <end position="196"/>
    </location>
</feature>
<feature type="helix" evidence="7">
    <location>
        <begin position="199"/>
        <end position="203"/>
    </location>
</feature>
<feature type="strand" evidence="8">
    <location>
        <begin position="205"/>
        <end position="207"/>
    </location>
</feature>
<feature type="helix" evidence="7">
    <location>
        <begin position="212"/>
        <end position="217"/>
    </location>
</feature>
<feature type="helix" evidence="7">
    <location>
        <begin position="220"/>
        <end position="223"/>
    </location>
</feature>
<feature type="turn" evidence="7">
    <location>
        <begin position="224"/>
        <end position="227"/>
    </location>
</feature>
<feature type="helix" evidence="7">
    <location>
        <begin position="233"/>
        <end position="236"/>
    </location>
</feature>
<feature type="helix" evidence="7">
    <location>
        <begin position="241"/>
        <end position="244"/>
    </location>
</feature>
<feature type="strand" evidence="7">
    <location>
        <begin position="251"/>
        <end position="258"/>
    </location>
</feature>
<feature type="helix" evidence="7">
    <location>
        <begin position="262"/>
        <end position="272"/>
    </location>
</feature>
<feature type="turn" evidence="7">
    <location>
        <begin position="273"/>
        <end position="275"/>
    </location>
</feature>
<feature type="strand" evidence="7">
    <location>
        <begin position="278"/>
        <end position="286"/>
    </location>
</feature>
<feature type="strand" evidence="7">
    <location>
        <begin position="291"/>
        <end position="294"/>
    </location>
</feature>
<feature type="helix" evidence="7">
    <location>
        <begin position="301"/>
        <end position="303"/>
    </location>
</feature>
<feature type="helix" evidence="7">
    <location>
        <begin position="307"/>
        <end position="322"/>
    </location>
</feature>
<feature type="turn" evidence="7">
    <location>
        <begin position="326"/>
        <end position="331"/>
    </location>
</feature>
<feature type="strand" evidence="7">
    <location>
        <begin position="334"/>
        <end position="340"/>
    </location>
</feature>
<feature type="turn" evidence="7">
    <location>
        <begin position="341"/>
        <end position="343"/>
    </location>
</feature>
<feature type="strand" evidence="7">
    <location>
        <begin position="344"/>
        <end position="352"/>
    </location>
</feature>
<feature type="strand" evidence="7">
    <location>
        <begin position="357"/>
        <end position="364"/>
    </location>
</feature>
<feature type="strand" evidence="7">
    <location>
        <begin position="377"/>
        <end position="381"/>
    </location>
</feature>
<feature type="strand" evidence="7">
    <location>
        <begin position="387"/>
        <end position="393"/>
    </location>
</feature>
<feature type="strand" evidence="7">
    <location>
        <begin position="407"/>
        <end position="410"/>
    </location>
</feature>
<feature type="helix" evidence="7">
    <location>
        <begin position="419"/>
        <end position="421"/>
    </location>
</feature>
<feature type="strand" evidence="7">
    <location>
        <begin position="428"/>
        <end position="431"/>
    </location>
</feature>
<feature type="strand" evidence="7">
    <location>
        <begin position="439"/>
        <end position="457"/>
    </location>
</feature>
<feature type="strand" evidence="7">
    <location>
        <begin position="459"/>
        <end position="467"/>
    </location>
</feature>
<feature type="strand" evidence="7">
    <location>
        <begin position="473"/>
        <end position="482"/>
    </location>
</feature>
<feature type="helix" evidence="7">
    <location>
        <begin position="483"/>
        <end position="485"/>
    </location>
</feature>
<feature type="strand" evidence="7">
    <location>
        <begin position="489"/>
        <end position="491"/>
    </location>
</feature>
<feature type="strand" evidence="7">
    <location>
        <begin position="501"/>
        <end position="514"/>
    </location>
</feature>
<feature type="strand" evidence="7">
    <location>
        <begin position="519"/>
        <end position="526"/>
    </location>
</feature>
<feature type="strand" evidence="7">
    <location>
        <begin position="537"/>
        <end position="540"/>
    </location>
</feature>
<feature type="helix" evidence="7">
    <location>
        <begin position="542"/>
        <end position="544"/>
    </location>
</feature>
<feature type="helix" evidence="7">
    <location>
        <begin position="547"/>
        <end position="549"/>
    </location>
</feature>
<feature type="strand" evidence="7">
    <location>
        <begin position="553"/>
        <end position="563"/>
    </location>
</feature>
<feature type="strand" evidence="7">
    <location>
        <begin position="566"/>
        <end position="572"/>
    </location>
</feature>
<name>COCE_RHOSM</name>
<sequence length="574" mass="62132">MVDGNYSVASNVMVPMRDGVRLAVDLYRPDADGPVPVLLVRNPYDKFDVFAWSTQSTNWLEFVRDGYAVVIQDTRGLFASEGEFVPHVDDEADAEDTLSWILEQAWCDGNVGMFGVSYLGVTQWQAAVSGVGGLKAIAPSMASADLYRAPWYGPGGALSVEALLGWSALIGTGLITSRSDARPEDAADFVQLAAILNDVAGAASVTPLAEQPLLGRLIPWVIDQVVDHPDNDESWQSISLFERLGGLATPALITAGWYDGFVGESLRTFVAVKDNADARLVVGPWSHSNLTGRNADRKFGIAATYPIQEATTMHKAFFDRHLRGETDALAGVPKVRLFVMGIDEWRDETDWPLPDTAYTPFYLGGSGAANTSTGGGTLSTSISGTESADTYLYDPADPVPSLGGTLLFHNGDNGPADQRPIHDRDDVLCYSTEVLTDPVEVTGTVSARLFVSSSAVDTDFTAKLVDVFPDGRAIALCDGIVRMRYRETLVNPTLIEAGEIYEVAIDMLATSNVFLPGHRIMVQVSSSNFPKYDRNSNTGGVIAREQLEEMCTAVNRIHRGPEHPSHIVLPIIKR</sequence>
<organism>
    <name type="scientific">Rhodococcus sp. (strain MB1 Bresler)</name>
    <dbReference type="NCBI Taxonomy" id="104109"/>
    <lineage>
        <taxon>Bacteria</taxon>
        <taxon>Bacillati</taxon>
        <taxon>Actinomycetota</taxon>
        <taxon>Actinomycetes</taxon>
        <taxon>Mycobacteriales</taxon>
        <taxon>Nocardiaceae</taxon>
        <taxon>Rhodococcus</taxon>
    </lineage>
</organism>